<reference key="1">
    <citation type="submission" date="2005-05" db="EMBL/GenBank/DDBJ databases">
        <authorList>
            <consortium name="NIH - Zebrafish Gene Collection (ZGC) project"/>
        </authorList>
    </citation>
    <scope>NUCLEOTIDE SEQUENCE [LARGE SCALE MRNA]</scope>
    <source>
        <tissue>Ovary</tissue>
    </source>
</reference>
<keyword id="KW-0880">Kelch repeat</keyword>
<keyword id="KW-1185">Reference proteome</keyword>
<keyword id="KW-0677">Repeat</keyword>
<keyword id="KW-0833">Ubl conjugation pathway</keyword>
<evidence type="ECO:0000250" key="1"/>
<evidence type="ECO:0000255" key="2">
    <source>
        <dbReference type="PROSITE-ProRule" id="PRU00037"/>
    </source>
</evidence>
<dbReference type="EMBL" id="BC095214">
    <property type="protein sequence ID" value="AAH95214.1"/>
    <property type="molecule type" value="mRNA"/>
</dbReference>
<dbReference type="RefSeq" id="NP_001018416.1">
    <property type="nucleotide sequence ID" value="NM_001020580.1"/>
</dbReference>
<dbReference type="SMR" id="Q503R4"/>
<dbReference type="FunCoup" id="Q503R4">
    <property type="interactions" value="760"/>
</dbReference>
<dbReference type="STRING" id="7955.ENSDARP00000039584"/>
<dbReference type="PaxDb" id="7955-ENSDARP00000039584"/>
<dbReference type="GeneID" id="553604"/>
<dbReference type="KEGG" id="dre:553604"/>
<dbReference type="AGR" id="ZFIN:ZDB-GENE-050522-324"/>
<dbReference type="CTD" id="79786"/>
<dbReference type="ZFIN" id="ZDB-GENE-050522-324">
    <property type="gene designation" value="klhl36"/>
</dbReference>
<dbReference type="eggNOG" id="KOG4441">
    <property type="taxonomic scope" value="Eukaryota"/>
</dbReference>
<dbReference type="InParanoid" id="Q503R4"/>
<dbReference type="OrthoDB" id="6611570at2759"/>
<dbReference type="PhylomeDB" id="Q503R4"/>
<dbReference type="UniPathway" id="UPA00143"/>
<dbReference type="PRO" id="PR:Q503R4"/>
<dbReference type="Proteomes" id="UP000000437">
    <property type="component" value="Alternate scaffold 18"/>
</dbReference>
<dbReference type="Proteomes" id="UP000000437">
    <property type="component" value="Chromosome 18"/>
</dbReference>
<dbReference type="GO" id="GO:0097602">
    <property type="term" value="F:cullin family protein binding"/>
    <property type="evidence" value="ECO:0000318"/>
    <property type="project" value="GO_Central"/>
</dbReference>
<dbReference type="GO" id="GO:0016567">
    <property type="term" value="P:protein ubiquitination"/>
    <property type="evidence" value="ECO:0007669"/>
    <property type="project" value="UniProtKB-UniPathway"/>
</dbReference>
<dbReference type="Gene3D" id="1.25.40.420">
    <property type="match status" value="1"/>
</dbReference>
<dbReference type="Gene3D" id="2.120.10.80">
    <property type="entry name" value="Kelch-type beta propeller"/>
    <property type="match status" value="1"/>
</dbReference>
<dbReference type="Gene3D" id="3.30.710.10">
    <property type="entry name" value="Potassium Channel Kv1.1, Chain A"/>
    <property type="match status" value="1"/>
</dbReference>
<dbReference type="InterPro" id="IPR011705">
    <property type="entry name" value="BACK"/>
</dbReference>
<dbReference type="InterPro" id="IPR017096">
    <property type="entry name" value="BTB-kelch_protein"/>
</dbReference>
<dbReference type="InterPro" id="IPR000210">
    <property type="entry name" value="BTB/POZ_dom"/>
</dbReference>
<dbReference type="InterPro" id="IPR015915">
    <property type="entry name" value="Kelch-typ_b-propeller"/>
</dbReference>
<dbReference type="InterPro" id="IPR006652">
    <property type="entry name" value="Kelch_1"/>
</dbReference>
<dbReference type="InterPro" id="IPR011333">
    <property type="entry name" value="SKP1/BTB/POZ_sf"/>
</dbReference>
<dbReference type="PANTHER" id="PTHR45632:SF4">
    <property type="entry name" value="KELCH-LIKE PROTEIN 36"/>
    <property type="match status" value="1"/>
</dbReference>
<dbReference type="PANTHER" id="PTHR45632">
    <property type="entry name" value="LD33804P"/>
    <property type="match status" value="1"/>
</dbReference>
<dbReference type="Pfam" id="PF07707">
    <property type="entry name" value="BACK"/>
    <property type="match status" value="1"/>
</dbReference>
<dbReference type="Pfam" id="PF00651">
    <property type="entry name" value="BTB"/>
    <property type="match status" value="1"/>
</dbReference>
<dbReference type="Pfam" id="PF01344">
    <property type="entry name" value="Kelch_1"/>
    <property type="match status" value="1"/>
</dbReference>
<dbReference type="Pfam" id="PF24681">
    <property type="entry name" value="Kelch_KLHDC2_KLHL20_DRC7"/>
    <property type="match status" value="1"/>
</dbReference>
<dbReference type="PIRSF" id="PIRSF037037">
    <property type="entry name" value="Kelch-like_protein_gigaxonin"/>
    <property type="match status" value="1"/>
</dbReference>
<dbReference type="SMART" id="SM00875">
    <property type="entry name" value="BACK"/>
    <property type="match status" value="1"/>
</dbReference>
<dbReference type="SMART" id="SM00225">
    <property type="entry name" value="BTB"/>
    <property type="match status" value="1"/>
</dbReference>
<dbReference type="SMART" id="SM00612">
    <property type="entry name" value="Kelch"/>
    <property type="match status" value="6"/>
</dbReference>
<dbReference type="SUPFAM" id="SSF117281">
    <property type="entry name" value="Kelch motif"/>
    <property type="match status" value="1"/>
</dbReference>
<dbReference type="SUPFAM" id="SSF54695">
    <property type="entry name" value="POZ domain"/>
    <property type="match status" value="1"/>
</dbReference>
<dbReference type="PROSITE" id="PS50097">
    <property type="entry name" value="BTB"/>
    <property type="match status" value="1"/>
</dbReference>
<name>KLH36_DANRE</name>
<gene>
    <name type="primary">klhl36</name>
    <name type="ORF">zgc:110268</name>
</gene>
<proteinExistence type="evidence at transcript level"/>
<protein>
    <recommendedName>
        <fullName>Kelch-like protein 36</fullName>
    </recommendedName>
</protein>
<feature type="chain" id="PRO_0000274694" description="Kelch-like protein 36">
    <location>
        <begin position="1"/>
        <end position="605"/>
    </location>
</feature>
<feature type="domain" description="BTB" evidence="2">
    <location>
        <begin position="45"/>
        <end position="112"/>
    </location>
</feature>
<feature type="domain" description="BACK">
    <location>
        <begin position="147"/>
        <end position="248"/>
    </location>
</feature>
<feature type="repeat" description="Kelch 1">
    <location>
        <begin position="295"/>
        <end position="344"/>
    </location>
</feature>
<feature type="repeat" description="Kelch 2">
    <location>
        <begin position="346"/>
        <end position="396"/>
    </location>
</feature>
<feature type="repeat" description="Kelch 3">
    <location>
        <begin position="397"/>
        <end position="443"/>
    </location>
</feature>
<feature type="repeat" description="Kelch 4">
    <location>
        <begin position="445"/>
        <end position="493"/>
    </location>
</feature>
<feature type="repeat" description="Kelch 5">
    <location>
        <begin position="494"/>
        <end position="546"/>
    </location>
</feature>
<feature type="repeat" description="Kelch 6">
    <location>
        <begin position="547"/>
        <end position="595"/>
    </location>
</feature>
<comment type="function">
    <text evidence="1">Probable substrate-specific adapter of an E3 ubiquitin-protein ligase complex which mediates the ubiquitination and subsequent proteasomal degradation of target proteins.</text>
</comment>
<comment type="pathway">
    <text>Protein modification; protein ubiquitination.</text>
</comment>
<organism>
    <name type="scientific">Danio rerio</name>
    <name type="common">Zebrafish</name>
    <name type="synonym">Brachydanio rerio</name>
    <dbReference type="NCBI Taxonomy" id="7955"/>
    <lineage>
        <taxon>Eukaryota</taxon>
        <taxon>Metazoa</taxon>
        <taxon>Chordata</taxon>
        <taxon>Craniata</taxon>
        <taxon>Vertebrata</taxon>
        <taxon>Euteleostomi</taxon>
        <taxon>Actinopterygii</taxon>
        <taxon>Neopterygii</taxon>
        <taxon>Teleostei</taxon>
        <taxon>Ostariophysi</taxon>
        <taxon>Cypriniformes</taxon>
        <taxon>Danionidae</taxon>
        <taxon>Danioninae</taxon>
        <taxon>Danio</taxon>
    </lineage>
</organism>
<accession>Q503R4</accession>
<sequence>MEIGKQTRLSRPHRLSESSKVYRWADQANNLLQGLNEQRQHGQMCDVVLVADDQRIPAHRALLAVSSPYFQAMFTLGMREEHESEIELVGASYVGVKAVIDFLYSGNLPLDGGNIDYVLETAHLLQVWQAVDFCCQYLEKEVREDNYLYLQELALLYSLDRLDAFIDRFILKHFSTLAITSEFLQDVRMFKLCAYLSSEQVQCLNEETLFEVAFKWLKQKPERLEFALQLLSNIRFALIPFYLLKYYVLPNLHSLLPLDTSCKVLVEEAIDYHRKLSAQPVMQTQRTGLRGGVECLLLLGGEVSERGEGLSAEVCWLDEEAGKWVEETKMPAPRSQHCVAVLGGFIFTAGGSCSPDNGGDSASDMLYRYDPRRCHWIKGAPMNQRRVDFYLGTMGECLIAVGGRNDSGPLSSVEVYHPADDHWTYVAELPKFTYGHAGTIHKGIVYISGGHDYQIGPYRHDMLSYDPKTADAWNECQAMILARGWHSMASLEDRIYAIGGSDDHEDSMERFDVLEVEAFDPQTNQWTMIAPLRYASSEAGLAVLNRKIYVLGGYSWETMDFSQGTQVFDPDKEQWTLGPNLPKHIAGPSCVCLIEPELIDSIDTE</sequence>